<feature type="chain" id="PRO_0000069294" description="C-C chemokine receptor type 10">
    <location>
        <begin position="1"/>
        <end position="362"/>
    </location>
</feature>
<feature type="topological domain" description="Extracellular" evidence="1">
    <location>
        <begin position="1"/>
        <end position="48"/>
    </location>
</feature>
<feature type="transmembrane region" description="Helical; Name=1" evidence="1">
    <location>
        <begin position="49"/>
        <end position="69"/>
    </location>
</feature>
<feature type="topological domain" description="Cytoplasmic" evidence="1">
    <location>
        <begin position="70"/>
        <end position="80"/>
    </location>
</feature>
<feature type="transmembrane region" description="Helical; Name=2" evidence="1">
    <location>
        <begin position="81"/>
        <end position="101"/>
    </location>
</feature>
<feature type="topological domain" description="Extracellular" evidence="1">
    <location>
        <begin position="102"/>
        <end position="115"/>
    </location>
</feature>
<feature type="transmembrane region" description="Helical; Name=3" evidence="1">
    <location>
        <begin position="116"/>
        <end position="136"/>
    </location>
</feature>
<feature type="topological domain" description="Cytoplasmic" evidence="1">
    <location>
        <begin position="137"/>
        <end position="159"/>
    </location>
</feature>
<feature type="transmembrane region" description="Helical; Name=4" evidence="1">
    <location>
        <begin position="160"/>
        <end position="180"/>
    </location>
</feature>
<feature type="topological domain" description="Extracellular" evidence="1">
    <location>
        <begin position="181"/>
        <end position="208"/>
    </location>
</feature>
<feature type="transmembrane region" description="Helical; Name=5" evidence="1">
    <location>
        <begin position="209"/>
        <end position="229"/>
    </location>
</feature>
<feature type="topological domain" description="Cytoplasmic" evidence="1">
    <location>
        <begin position="230"/>
        <end position="247"/>
    </location>
</feature>
<feature type="transmembrane region" description="Helical; Name=6" evidence="1">
    <location>
        <begin position="248"/>
        <end position="268"/>
    </location>
</feature>
<feature type="topological domain" description="Extracellular" evidence="1">
    <location>
        <begin position="269"/>
        <end position="291"/>
    </location>
</feature>
<feature type="transmembrane region" description="Helical; Name=7" evidence="1">
    <location>
        <begin position="292"/>
        <end position="312"/>
    </location>
</feature>
<feature type="topological domain" description="Cytoplasmic" evidence="1">
    <location>
        <begin position="313"/>
        <end position="362"/>
    </location>
</feature>
<feature type="disulfide bond" evidence="2">
    <location>
        <begin position="113"/>
        <end position="191"/>
    </location>
</feature>
<feature type="sequence conflict" description="In Ref. 1; AAF63710/AAF63711." evidence="4" ref="1">
    <original>S</original>
    <variation>N</variation>
    <location>
        <position position="135"/>
    </location>
</feature>
<organism>
    <name type="scientific">Mus musculus</name>
    <name type="common">Mouse</name>
    <dbReference type="NCBI Taxonomy" id="10090"/>
    <lineage>
        <taxon>Eukaryota</taxon>
        <taxon>Metazoa</taxon>
        <taxon>Chordata</taxon>
        <taxon>Craniata</taxon>
        <taxon>Vertebrata</taxon>
        <taxon>Euteleostomi</taxon>
        <taxon>Mammalia</taxon>
        <taxon>Eutheria</taxon>
        <taxon>Euarchontoglires</taxon>
        <taxon>Glires</taxon>
        <taxon>Rodentia</taxon>
        <taxon>Myomorpha</taxon>
        <taxon>Muroidea</taxon>
        <taxon>Muridae</taxon>
        <taxon>Murinae</taxon>
        <taxon>Mus</taxon>
        <taxon>Mus</taxon>
    </lineage>
</organism>
<evidence type="ECO:0000255" key="1"/>
<evidence type="ECO:0000255" key="2">
    <source>
        <dbReference type="PROSITE-ProRule" id="PRU00521"/>
    </source>
</evidence>
<evidence type="ECO:0000269" key="3">
    <source>
    </source>
</evidence>
<evidence type="ECO:0000305" key="4"/>
<dbReference type="EMBL" id="AF215982">
    <property type="protein sequence ID" value="AAF63710.1"/>
    <property type="molecule type" value="mRNA"/>
</dbReference>
<dbReference type="EMBL" id="AF215983">
    <property type="protein sequence ID" value="AAF63711.1"/>
    <property type="molecule type" value="mRNA"/>
</dbReference>
<dbReference type="EMBL" id="AF208238">
    <property type="protein sequence ID" value="AAF72872.1"/>
    <property type="molecule type" value="mRNA"/>
</dbReference>
<dbReference type="EMBL" id="AK090044">
    <property type="protein sequence ID" value="BAC41062.1"/>
    <property type="molecule type" value="mRNA"/>
</dbReference>
<dbReference type="EMBL" id="AL590969">
    <property type="status" value="NOT_ANNOTATED_CDS"/>
    <property type="molecule type" value="Genomic_DNA"/>
</dbReference>
<dbReference type="EMBL" id="CH466677">
    <property type="protein sequence ID" value="EDL03895.1"/>
    <property type="molecule type" value="Genomic_DNA"/>
</dbReference>
<dbReference type="EMBL" id="BC117043">
    <property type="protein sequence ID" value="AAI17044.1"/>
    <property type="molecule type" value="mRNA"/>
</dbReference>
<dbReference type="EMBL" id="BC120542">
    <property type="protein sequence ID" value="AAI20543.1"/>
    <property type="molecule type" value="mRNA"/>
</dbReference>
<dbReference type="CCDS" id="CCDS25454.1"/>
<dbReference type="RefSeq" id="NP_031747.2">
    <property type="nucleotide sequence ID" value="NM_007721.4"/>
</dbReference>
<dbReference type="SMR" id="Q9JL21"/>
<dbReference type="FunCoup" id="Q9JL21">
    <property type="interactions" value="498"/>
</dbReference>
<dbReference type="STRING" id="10090.ENSMUSP00000062588"/>
<dbReference type="BindingDB" id="Q9JL21"/>
<dbReference type="ChEMBL" id="CHEMBL3879821"/>
<dbReference type="GuidetoPHARMACOLOGY" id="67"/>
<dbReference type="iPTMnet" id="Q9JL21"/>
<dbReference type="PhosphoSitePlus" id="Q9JL21"/>
<dbReference type="PaxDb" id="10090-ENSMUSP00000062588"/>
<dbReference type="ProteomicsDB" id="281429"/>
<dbReference type="Antibodypedia" id="3185">
    <property type="antibodies" value="414 antibodies from 36 providers"/>
</dbReference>
<dbReference type="DNASU" id="12777"/>
<dbReference type="Ensembl" id="ENSMUST00000062759.4">
    <property type="protein sequence ID" value="ENSMUSP00000062588.4"/>
    <property type="gene ID" value="ENSMUSG00000044052.4"/>
</dbReference>
<dbReference type="GeneID" id="12777"/>
<dbReference type="KEGG" id="mmu:12777"/>
<dbReference type="UCSC" id="uc007lns.1">
    <property type="organism name" value="mouse"/>
</dbReference>
<dbReference type="AGR" id="MGI:1096320"/>
<dbReference type="CTD" id="2826"/>
<dbReference type="MGI" id="MGI:1096320">
    <property type="gene designation" value="Ccr10"/>
</dbReference>
<dbReference type="VEuPathDB" id="HostDB:ENSMUSG00000044052"/>
<dbReference type="eggNOG" id="KOG3656">
    <property type="taxonomic scope" value="Eukaryota"/>
</dbReference>
<dbReference type="GeneTree" id="ENSGT01030000234667"/>
<dbReference type="HOGENOM" id="CLU_009579_8_3_1"/>
<dbReference type="InParanoid" id="Q9JL21"/>
<dbReference type="OMA" id="PNPRGRC"/>
<dbReference type="OrthoDB" id="8957211at2759"/>
<dbReference type="PhylomeDB" id="Q9JL21"/>
<dbReference type="TreeFam" id="TF330966"/>
<dbReference type="Reactome" id="R-MMU-380108">
    <property type="pathway name" value="Chemokine receptors bind chemokines"/>
</dbReference>
<dbReference type="Reactome" id="R-MMU-418594">
    <property type="pathway name" value="G alpha (i) signalling events"/>
</dbReference>
<dbReference type="BioGRID-ORCS" id="12777">
    <property type="hits" value="1 hit in 76 CRISPR screens"/>
</dbReference>
<dbReference type="PRO" id="PR:Q9JL21"/>
<dbReference type="Proteomes" id="UP000000589">
    <property type="component" value="Chromosome 11"/>
</dbReference>
<dbReference type="RNAct" id="Q9JL21">
    <property type="molecule type" value="protein"/>
</dbReference>
<dbReference type="Bgee" id="ENSMUSG00000044052">
    <property type="expression patterns" value="Expressed in epiblast cell in embryo and 27 other cell types or tissues"/>
</dbReference>
<dbReference type="GO" id="GO:0009986">
    <property type="term" value="C:cell surface"/>
    <property type="evidence" value="ECO:0007669"/>
    <property type="project" value="Ensembl"/>
</dbReference>
<dbReference type="GO" id="GO:0005783">
    <property type="term" value="C:endoplasmic reticulum"/>
    <property type="evidence" value="ECO:0007669"/>
    <property type="project" value="Ensembl"/>
</dbReference>
<dbReference type="GO" id="GO:0005886">
    <property type="term" value="C:plasma membrane"/>
    <property type="evidence" value="ECO:0000250"/>
    <property type="project" value="MGI"/>
</dbReference>
<dbReference type="GO" id="GO:0016493">
    <property type="term" value="F:C-C chemokine receptor activity"/>
    <property type="evidence" value="ECO:0000314"/>
    <property type="project" value="MGI"/>
</dbReference>
<dbReference type="GO" id="GO:0004950">
    <property type="term" value="F:chemokine receptor activity"/>
    <property type="evidence" value="ECO:0000314"/>
    <property type="project" value="MGI"/>
</dbReference>
<dbReference type="GO" id="GO:0006935">
    <property type="term" value="P:chemotaxis"/>
    <property type="evidence" value="ECO:0000314"/>
    <property type="project" value="MGI"/>
</dbReference>
<dbReference type="GO" id="GO:0006955">
    <property type="term" value="P:immune response"/>
    <property type="evidence" value="ECO:0007669"/>
    <property type="project" value="InterPro"/>
</dbReference>
<dbReference type="GO" id="GO:0007204">
    <property type="term" value="P:positive regulation of cytosolic calcium ion concentration"/>
    <property type="evidence" value="ECO:0000314"/>
    <property type="project" value="MGI"/>
</dbReference>
<dbReference type="FunFam" id="1.20.1070.10:FF:000184">
    <property type="entry name" value="C-C chemokine receptor type 10"/>
    <property type="match status" value="1"/>
</dbReference>
<dbReference type="Gene3D" id="1.20.1070.10">
    <property type="entry name" value="Rhodopsin 7-helix transmembrane proteins"/>
    <property type="match status" value="1"/>
</dbReference>
<dbReference type="InterPro" id="IPR050119">
    <property type="entry name" value="CCR1-9-like"/>
</dbReference>
<dbReference type="InterPro" id="IPR005382">
    <property type="entry name" value="Chemokine_CCR10"/>
</dbReference>
<dbReference type="InterPro" id="IPR000276">
    <property type="entry name" value="GPCR_Rhodpsn"/>
</dbReference>
<dbReference type="InterPro" id="IPR017452">
    <property type="entry name" value="GPCR_Rhodpsn_7TM"/>
</dbReference>
<dbReference type="PANTHER" id="PTHR10489:SF735">
    <property type="entry name" value="C-C CHEMOKINE RECEPTOR TYPE 10"/>
    <property type="match status" value="1"/>
</dbReference>
<dbReference type="PANTHER" id="PTHR10489">
    <property type="entry name" value="CELL ADHESION MOLECULE"/>
    <property type="match status" value="1"/>
</dbReference>
<dbReference type="Pfam" id="PF00001">
    <property type="entry name" value="7tm_1"/>
    <property type="match status" value="1"/>
</dbReference>
<dbReference type="PRINTS" id="PR01557">
    <property type="entry name" value="CHEMOKINER10"/>
</dbReference>
<dbReference type="PRINTS" id="PR00237">
    <property type="entry name" value="GPCRRHODOPSN"/>
</dbReference>
<dbReference type="SUPFAM" id="SSF81321">
    <property type="entry name" value="Family A G protein-coupled receptor-like"/>
    <property type="match status" value="1"/>
</dbReference>
<dbReference type="PROSITE" id="PS00237">
    <property type="entry name" value="G_PROTEIN_RECEP_F1_1"/>
    <property type="match status" value="1"/>
</dbReference>
<dbReference type="PROSITE" id="PS50262">
    <property type="entry name" value="G_PROTEIN_RECEP_F1_2"/>
    <property type="match status" value="1"/>
</dbReference>
<proteinExistence type="evidence at protein level"/>
<name>CCR10_MOUSE</name>
<gene>
    <name type="primary">Ccr10</name>
    <name type="synonym">Cmkbr9</name>
    <name type="synonym">Gpr2</name>
</gene>
<reference key="1">
    <citation type="journal article" date="2000" name="J. Immunol.">
        <title>Identification of the orphan receptor G-protein-coupled receptor 2 as CCR10, a specific receptor for the chemokine ESkine.</title>
        <authorList>
            <person name="Jarmin D.I."/>
            <person name="Rits M."/>
            <person name="Bota D."/>
            <person name="Gerard N.P."/>
            <person name="Graham G.J."/>
            <person name="Clark-Lewis I."/>
            <person name="Gerard C."/>
        </authorList>
    </citation>
    <scope>NUCLEOTIDE SEQUENCE [MRNA]</scope>
    <scope>CHARACTERIZATION</scope>
    <source>
        <strain>BALB/cJ</strain>
        <tissue>Peyer patch</tissue>
    </source>
</reference>
<reference key="2">
    <citation type="journal article" date="2000" name="J. Biol. Chem.">
        <title>Identification of a novel chemokine (CCL28), which binds CCR10 (GPR2).</title>
        <authorList>
            <person name="Wang W."/>
            <person name="Soto H."/>
            <person name="Oldham E.R."/>
            <person name="Buchanan M.E."/>
            <person name="Homey B."/>
            <person name="Catron D."/>
            <person name="Jenkins N."/>
            <person name="Copeland N.G."/>
            <person name="Gilbert D.J."/>
            <person name="Nguyen N."/>
            <person name="Abrams J."/>
            <person name="Kershenovich D."/>
            <person name="Smith K."/>
            <person name="McClanahan T."/>
            <person name="Vicari A.P."/>
            <person name="Zlotnik A."/>
        </authorList>
    </citation>
    <scope>NUCLEOTIDE SEQUENCE [MRNA]</scope>
    <scope>TISSUE SPECIFICITY</scope>
    <scope>LIGAND-BINDING</scope>
    <source>
        <tissue>Thymocyte</tissue>
    </source>
</reference>
<reference key="3">
    <citation type="journal article" date="2005" name="Science">
        <title>The transcriptional landscape of the mammalian genome.</title>
        <authorList>
            <person name="Carninci P."/>
            <person name="Kasukawa T."/>
            <person name="Katayama S."/>
            <person name="Gough J."/>
            <person name="Frith M.C."/>
            <person name="Maeda N."/>
            <person name="Oyama R."/>
            <person name="Ravasi T."/>
            <person name="Lenhard B."/>
            <person name="Wells C."/>
            <person name="Kodzius R."/>
            <person name="Shimokawa K."/>
            <person name="Bajic V.B."/>
            <person name="Brenner S.E."/>
            <person name="Batalov S."/>
            <person name="Forrest A.R."/>
            <person name="Zavolan M."/>
            <person name="Davis M.J."/>
            <person name="Wilming L.G."/>
            <person name="Aidinis V."/>
            <person name="Allen J.E."/>
            <person name="Ambesi-Impiombato A."/>
            <person name="Apweiler R."/>
            <person name="Aturaliya R.N."/>
            <person name="Bailey T.L."/>
            <person name="Bansal M."/>
            <person name="Baxter L."/>
            <person name="Beisel K.W."/>
            <person name="Bersano T."/>
            <person name="Bono H."/>
            <person name="Chalk A.M."/>
            <person name="Chiu K.P."/>
            <person name="Choudhary V."/>
            <person name="Christoffels A."/>
            <person name="Clutterbuck D.R."/>
            <person name="Crowe M.L."/>
            <person name="Dalla E."/>
            <person name="Dalrymple B.P."/>
            <person name="de Bono B."/>
            <person name="Della Gatta G."/>
            <person name="di Bernardo D."/>
            <person name="Down T."/>
            <person name="Engstrom P."/>
            <person name="Fagiolini M."/>
            <person name="Faulkner G."/>
            <person name="Fletcher C.F."/>
            <person name="Fukushima T."/>
            <person name="Furuno M."/>
            <person name="Futaki S."/>
            <person name="Gariboldi M."/>
            <person name="Georgii-Hemming P."/>
            <person name="Gingeras T.R."/>
            <person name="Gojobori T."/>
            <person name="Green R.E."/>
            <person name="Gustincich S."/>
            <person name="Harbers M."/>
            <person name="Hayashi Y."/>
            <person name="Hensch T.K."/>
            <person name="Hirokawa N."/>
            <person name="Hill D."/>
            <person name="Huminiecki L."/>
            <person name="Iacono M."/>
            <person name="Ikeo K."/>
            <person name="Iwama A."/>
            <person name="Ishikawa T."/>
            <person name="Jakt M."/>
            <person name="Kanapin A."/>
            <person name="Katoh M."/>
            <person name="Kawasawa Y."/>
            <person name="Kelso J."/>
            <person name="Kitamura H."/>
            <person name="Kitano H."/>
            <person name="Kollias G."/>
            <person name="Krishnan S.P."/>
            <person name="Kruger A."/>
            <person name="Kummerfeld S.K."/>
            <person name="Kurochkin I.V."/>
            <person name="Lareau L.F."/>
            <person name="Lazarevic D."/>
            <person name="Lipovich L."/>
            <person name="Liu J."/>
            <person name="Liuni S."/>
            <person name="McWilliam S."/>
            <person name="Madan Babu M."/>
            <person name="Madera M."/>
            <person name="Marchionni L."/>
            <person name="Matsuda H."/>
            <person name="Matsuzawa S."/>
            <person name="Miki H."/>
            <person name="Mignone F."/>
            <person name="Miyake S."/>
            <person name="Morris K."/>
            <person name="Mottagui-Tabar S."/>
            <person name="Mulder N."/>
            <person name="Nakano N."/>
            <person name="Nakauchi H."/>
            <person name="Ng P."/>
            <person name="Nilsson R."/>
            <person name="Nishiguchi S."/>
            <person name="Nishikawa S."/>
            <person name="Nori F."/>
            <person name="Ohara O."/>
            <person name="Okazaki Y."/>
            <person name="Orlando V."/>
            <person name="Pang K.C."/>
            <person name="Pavan W.J."/>
            <person name="Pavesi G."/>
            <person name="Pesole G."/>
            <person name="Petrovsky N."/>
            <person name="Piazza S."/>
            <person name="Reed J."/>
            <person name="Reid J.F."/>
            <person name="Ring B.Z."/>
            <person name="Ringwald M."/>
            <person name="Rost B."/>
            <person name="Ruan Y."/>
            <person name="Salzberg S.L."/>
            <person name="Sandelin A."/>
            <person name="Schneider C."/>
            <person name="Schoenbach C."/>
            <person name="Sekiguchi K."/>
            <person name="Semple C.A."/>
            <person name="Seno S."/>
            <person name="Sessa L."/>
            <person name="Sheng Y."/>
            <person name="Shibata Y."/>
            <person name="Shimada H."/>
            <person name="Shimada K."/>
            <person name="Silva D."/>
            <person name="Sinclair B."/>
            <person name="Sperling S."/>
            <person name="Stupka E."/>
            <person name="Sugiura K."/>
            <person name="Sultana R."/>
            <person name="Takenaka Y."/>
            <person name="Taki K."/>
            <person name="Tammoja K."/>
            <person name="Tan S.L."/>
            <person name="Tang S."/>
            <person name="Taylor M.S."/>
            <person name="Tegner J."/>
            <person name="Teichmann S.A."/>
            <person name="Ueda H.R."/>
            <person name="van Nimwegen E."/>
            <person name="Verardo R."/>
            <person name="Wei C.L."/>
            <person name="Yagi K."/>
            <person name="Yamanishi H."/>
            <person name="Zabarovsky E."/>
            <person name="Zhu S."/>
            <person name="Zimmer A."/>
            <person name="Hide W."/>
            <person name="Bult C."/>
            <person name="Grimmond S.M."/>
            <person name="Teasdale R.D."/>
            <person name="Liu E.T."/>
            <person name="Brusic V."/>
            <person name="Quackenbush J."/>
            <person name="Wahlestedt C."/>
            <person name="Mattick J.S."/>
            <person name="Hume D.A."/>
            <person name="Kai C."/>
            <person name="Sasaki D."/>
            <person name="Tomaru Y."/>
            <person name="Fukuda S."/>
            <person name="Kanamori-Katayama M."/>
            <person name="Suzuki M."/>
            <person name="Aoki J."/>
            <person name="Arakawa T."/>
            <person name="Iida J."/>
            <person name="Imamura K."/>
            <person name="Itoh M."/>
            <person name="Kato T."/>
            <person name="Kawaji H."/>
            <person name="Kawagashira N."/>
            <person name="Kawashima T."/>
            <person name="Kojima M."/>
            <person name="Kondo S."/>
            <person name="Konno H."/>
            <person name="Nakano K."/>
            <person name="Ninomiya N."/>
            <person name="Nishio T."/>
            <person name="Okada M."/>
            <person name="Plessy C."/>
            <person name="Shibata K."/>
            <person name="Shiraki T."/>
            <person name="Suzuki S."/>
            <person name="Tagami M."/>
            <person name="Waki K."/>
            <person name="Watahiki A."/>
            <person name="Okamura-Oho Y."/>
            <person name="Suzuki H."/>
            <person name="Kawai J."/>
            <person name="Hayashizaki Y."/>
        </authorList>
    </citation>
    <scope>NUCLEOTIDE SEQUENCE [LARGE SCALE MRNA]</scope>
    <source>
        <tissue>Thymocyte</tissue>
    </source>
</reference>
<reference key="4">
    <citation type="journal article" date="2009" name="PLoS Biol.">
        <title>Lineage-specific biology revealed by a finished genome assembly of the mouse.</title>
        <authorList>
            <person name="Church D.M."/>
            <person name="Goodstadt L."/>
            <person name="Hillier L.W."/>
            <person name="Zody M.C."/>
            <person name="Goldstein S."/>
            <person name="She X."/>
            <person name="Bult C.J."/>
            <person name="Agarwala R."/>
            <person name="Cherry J.L."/>
            <person name="DiCuccio M."/>
            <person name="Hlavina W."/>
            <person name="Kapustin Y."/>
            <person name="Meric P."/>
            <person name="Maglott D."/>
            <person name="Birtle Z."/>
            <person name="Marques A.C."/>
            <person name="Graves T."/>
            <person name="Zhou S."/>
            <person name="Teague B."/>
            <person name="Potamousis K."/>
            <person name="Churas C."/>
            <person name="Place M."/>
            <person name="Herschleb J."/>
            <person name="Runnheim R."/>
            <person name="Forrest D."/>
            <person name="Amos-Landgraf J."/>
            <person name="Schwartz D.C."/>
            <person name="Cheng Z."/>
            <person name="Lindblad-Toh K."/>
            <person name="Eichler E.E."/>
            <person name="Ponting C.P."/>
        </authorList>
    </citation>
    <scope>NUCLEOTIDE SEQUENCE [LARGE SCALE GENOMIC DNA]</scope>
    <source>
        <strain>C57BL/6J</strain>
    </source>
</reference>
<reference key="5">
    <citation type="submission" date="2005-07" db="EMBL/GenBank/DDBJ databases">
        <authorList>
            <person name="Mural R.J."/>
            <person name="Adams M.D."/>
            <person name="Myers E.W."/>
            <person name="Smith H.O."/>
            <person name="Venter J.C."/>
        </authorList>
    </citation>
    <scope>NUCLEOTIDE SEQUENCE [LARGE SCALE GENOMIC DNA]</scope>
</reference>
<reference key="6">
    <citation type="journal article" date="2004" name="Genome Res.">
        <title>The status, quality, and expansion of the NIH full-length cDNA project: the Mammalian Gene Collection (MGC).</title>
        <authorList>
            <consortium name="The MGC Project Team"/>
        </authorList>
    </citation>
    <scope>NUCLEOTIDE SEQUENCE [LARGE SCALE MRNA]</scope>
    <source>
        <tissue>Thymus</tissue>
    </source>
</reference>
<comment type="function">
    <text>Receptor for chemokines SCYA27 and SCYA28. Subsequently transduces a signal by increasing the intracellular calcium ions level.</text>
</comment>
<comment type="subcellular location">
    <subcellularLocation>
        <location>Cell membrane</location>
        <topology>Multi-pass membrane protein</topology>
    </subcellularLocation>
</comment>
<comment type="tissue specificity">
    <text evidence="3">Expressed at high levels in small intestine, colon, lymph nodes, Peyer patches and at lower levels in thymus, lung and spleen.</text>
</comment>
<comment type="similarity">
    <text evidence="2">Belongs to the G-protein coupled receptor 1 family.</text>
</comment>
<keyword id="KW-1003">Cell membrane</keyword>
<keyword id="KW-1015">Disulfide bond</keyword>
<keyword id="KW-0297">G-protein coupled receptor</keyword>
<keyword id="KW-0472">Membrane</keyword>
<keyword id="KW-0675">Receptor</keyword>
<keyword id="KW-1185">Reference proteome</keyword>
<keyword id="KW-0807">Transducer</keyword>
<keyword id="KW-0812">Transmembrane</keyword>
<keyword id="KW-1133">Transmembrane helix</keyword>
<sequence length="362" mass="38900">MGTKPTEQVSWGLYSGYDEEAYSVGPLPELCYKADVQAFSRAFQPSVSLMVAVLGLAGNGLVLATHLAARRTTRSPTSVHLLQLALADLLLALTLPFAAAGALQGWNLGSTTCRAISGLYSASFHAGFLFLACISADRYVAIARALPAGQRPSTPSRAHLVSVFVWLLSLFLALPALLFSRDGPREGQRRCRLIFPESLTQTVKGASAVAQVVLGFALPLGVMAACYALLGRTLLAARGPERRRALRVVVALVVAFVVLQLPYSLALLLDTADLLAARERSCSSSKRKDLALLVTGGLTLVRCSLNPVLYAFLGLRFRRDLRRLLQGGGCSPKPNPRGRCPRRLRLSSCSAPTETHSLSWDN</sequence>
<accession>Q9JL21</accession>
<accession>Q542A4</accession>
<accession>Q9JIP1</accession>
<accession>Q9JL20</accession>
<protein>
    <recommendedName>
        <fullName>C-C chemokine receptor type 10</fullName>
        <shortName>C-C CKR-10</shortName>
        <shortName>CC-CKR-10</shortName>
        <shortName>CCR-10</shortName>
    </recommendedName>
    <alternativeName>
        <fullName>Chemokine C-C receptor 9</fullName>
    </alternativeName>
    <alternativeName>
        <fullName>G-protein coupled receptor 2</fullName>
    </alternativeName>
</protein>